<gene>
    <name type="primary">GIM3</name>
    <name type="synonym">PFD4</name>
    <name type="ordered locus">YNL153C</name>
    <name type="ORF">N1761</name>
</gene>
<protein>
    <recommendedName>
        <fullName>Prefoldin subunit 4</fullName>
    </recommendedName>
    <alternativeName>
        <fullName>Genes involved in microtubule biogenesis protein 3</fullName>
    </alternativeName>
    <alternativeName>
        <fullName>Gim complex subunit 3</fullName>
        <shortName>GimC subunit 3</shortName>
    </alternativeName>
</protein>
<reference key="1">
    <citation type="journal article" date="1996" name="Yeast">
        <title>The sequence of 36.8 kb from the left arm of chromosome XIV reveals 24 complete open reading frames: 18 correspond to new genes, one of which encodes a protein similar to the human myotonic dystrophy kinase.</title>
        <authorList>
            <person name="Nasr F."/>
            <person name="Becam A.-M."/>
            <person name="Herbert C.J."/>
        </authorList>
    </citation>
    <scope>NUCLEOTIDE SEQUENCE [GENOMIC DNA]</scope>
    <source>
        <strain>ATCC 96604 / S288c / FY1679</strain>
    </source>
</reference>
<reference key="2">
    <citation type="journal article" date="1997" name="Nature">
        <title>The nucleotide sequence of Saccharomyces cerevisiae chromosome XIV and its evolutionary implications.</title>
        <authorList>
            <person name="Philippsen P."/>
            <person name="Kleine K."/>
            <person name="Poehlmann R."/>
            <person name="Duesterhoeft A."/>
            <person name="Hamberg K."/>
            <person name="Hegemann J.H."/>
            <person name="Obermaier B."/>
            <person name="Urrestarazu L.A."/>
            <person name="Aert R."/>
            <person name="Albermann K."/>
            <person name="Altmann R."/>
            <person name="Andre B."/>
            <person name="Baladron V."/>
            <person name="Ballesta J.P.G."/>
            <person name="Becam A.-M."/>
            <person name="Beinhauer J.D."/>
            <person name="Boskovic J."/>
            <person name="Buitrago M.J."/>
            <person name="Bussereau F."/>
            <person name="Coster F."/>
            <person name="Crouzet M."/>
            <person name="D'Angelo M."/>
            <person name="Dal Pero F."/>
            <person name="De Antoni A."/>
            <person name="del Rey F."/>
            <person name="Doignon F."/>
            <person name="Domdey H."/>
            <person name="Dubois E."/>
            <person name="Fiedler T.A."/>
            <person name="Fleig U."/>
            <person name="Floeth M."/>
            <person name="Fritz C."/>
            <person name="Gaillardin C."/>
            <person name="Garcia-Cantalejo J.M."/>
            <person name="Glansdorff N."/>
            <person name="Goffeau A."/>
            <person name="Gueldener U."/>
            <person name="Herbert C.J."/>
            <person name="Heumann K."/>
            <person name="Heuss-Neitzel D."/>
            <person name="Hilbert H."/>
            <person name="Hinni K."/>
            <person name="Iraqui Houssaini I."/>
            <person name="Jacquet M."/>
            <person name="Jimenez A."/>
            <person name="Jonniaux J.-L."/>
            <person name="Karpfinger-Hartl L."/>
            <person name="Lanfranchi G."/>
            <person name="Lepingle A."/>
            <person name="Levesque H."/>
            <person name="Lyck R."/>
            <person name="Maftahi M."/>
            <person name="Mallet L."/>
            <person name="Maurer C.T.C."/>
            <person name="Messenguy F."/>
            <person name="Mewes H.-W."/>
            <person name="Moestl D."/>
            <person name="Nasr F."/>
            <person name="Nicaud J.-M."/>
            <person name="Niedenthal R.K."/>
            <person name="Pandolfo D."/>
            <person name="Pierard A."/>
            <person name="Piravandi E."/>
            <person name="Planta R.J."/>
            <person name="Pohl T.M."/>
            <person name="Purnelle B."/>
            <person name="Rebischung C."/>
            <person name="Remacha M.A."/>
            <person name="Revuelta J.L."/>
            <person name="Rinke M."/>
            <person name="Saiz J.E."/>
            <person name="Sartorello F."/>
            <person name="Scherens B."/>
            <person name="Sen-Gupta M."/>
            <person name="Soler-Mira A."/>
            <person name="Urbanus J.H.M."/>
            <person name="Valle G."/>
            <person name="Van Dyck L."/>
            <person name="Verhasselt P."/>
            <person name="Vierendeels F."/>
            <person name="Vissers S."/>
            <person name="Voet M."/>
            <person name="Volckaert G."/>
            <person name="Wach A."/>
            <person name="Wambutt R."/>
            <person name="Wedler H."/>
            <person name="Zollner A."/>
            <person name="Hani J."/>
        </authorList>
    </citation>
    <scope>NUCLEOTIDE SEQUENCE [LARGE SCALE GENOMIC DNA]</scope>
    <source>
        <strain>ATCC 204508 / S288c</strain>
    </source>
</reference>
<reference key="3">
    <citation type="journal article" date="2014" name="G3 (Bethesda)">
        <title>The reference genome sequence of Saccharomyces cerevisiae: Then and now.</title>
        <authorList>
            <person name="Engel S.R."/>
            <person name="Dietrich F.S."/>
            <person name="Fisk D.G."/>
            <person name="Binkley G."/>
            <person name="Balakrishnan R."/>
            <person name="Costanzo M.C."/>
            <person name="Dwight S.S."/>
            <person name="Hitz B.C."/>
            <person name="Karra K."/>
            <person name="Nash R.S."/>
            <person name="Weng S."/>
            <person name="Wong E.D."/>
            <person name="Lloyd P."/>
            <person name="Skrzypek M.S."/>
            <person name="Miyasato S.R."/>
            <person name="Simison M."/>
            <person name="Cherry J.M."/>
        </authorList>
    </citation>
    <scope>GENOME REANNOTATION</scope>
    <source>
        <strain>ATCC 204508 / S288c</strain>
    </source>
</reference>
<reference key="4">
    <citation type="journal article" date="2007" name="Genome Res.">
        <title>Approaching a complete repository of sequence-verified protein-encoding clones for Saccharomyces cerevisiae.</title>
        <authorList>
            <person name="Hu Y."/>
            <person name="Rolfs A."/>
            <person name="Bhullar B."/>
            <person name="Murthy T.V.S."/>
            <person name="Zhu C."/>
            <person name="Berger M.F."/>
            <person name="Camargo A.A."/>
            <person name="Kelley F."/>
            <person name="McCarron S."/>
            <person name="Jepson D."/>
            <person name="Richardson A."/>
            <person name="Raphael J."/>
            <person name="Moreira D."/>
            <person name="Taycher E."/>
            <person name="Zuo D."/>
            <person name="Mohr S."/>
            <person name="Kane M.F."/>
            <person name="Williamson J."/>
            <person name="Simpson A.J.G."/>
            <person name="Bulyk M.L."/>
            <person name="Harlow E."/>
            <person name="Marsischky G."/>
            <person name="Kolodner R.D."/>
            <person name="LaBaer J."/>
        </authorList>
    </citation>
    <scope>NUCLEOTIDE SEQUENCE [GENOMIC DNA]</scope>
    <source>
        <strain>ATCC 204508 / S288c</strain>
    </source>
</reference>
<reference key="5">
    <citation type="journal article" date="1998" name="EMBO J.">
        <title>A novel protein complex promoting formation of functional alpha- and gamma-tubulin.</title>
        <authorList>
            <person name="Geissler S."/>
            <person name="Siegers K."/>
            <person name="Schiebel E."/>
        </authorList>
    </citation>
    <scope>CHARACTERIZATION</scope>
</reference>
<reference key="6">
    <citation type="journal article" date="1999" name="EMBO J.">
        <title>Compartmentation of protein folding in vivo: sequestration of non-native polypeptide by the chaperonin-GimC system.</title>
        <authorList>
            <person name="Siegers K."/>
            <person name="Waldmann T."/>
            <person name="Leroux M.R."/>
            <person name="Grein K."/>
            <person name="Shevchenko A."/>
            <person name="Schiebel E."/>
            <person name="Hartl F.U."/>
        </authorList>
    </citation>
    <scope>IDENTIFICATION IN THE PREFOLDIN COMPLEX</scope>
</reference>
<reference key="7">
    <citation type="journal article" date="2003" name="Nature">
        <title>Global analysis of protein expression in yeast.</title>
        <authorList>
            <person name="Ghaemmaghami S."/>
            <person name="Huh W.-K."/>
            <person name="Bower K."/>
            <person name="Howson R.W."/>
            <person name="Belle A."/>
            <person name="Dephoure N."/>
            <person name="O'Shea E.K."/>
            <person name="Weissman J.S."/>
        </authorList>
    </citation>
    <scope>LEVEL OF PROTEIN EXPRESSION [LARGE SCALE ANALYSIS]</scope>
</reference>
<reference key="8">
    <citation type="journal article" date="2012" name="Proc. Natl. Acad. Sci. U.S.A.">
        <title>N-terminal acetylome analyses and functional insights of the N-terminal acetyltransferase NatB.</title>
        <authorList>
            <person name="Van Damme P."/>
            <person name="Lasa M."/>
            <person name="Polevoda B."/>
            <person name="Gazquez C."/>
            <person name="Elosegui-Artola A."/>
            <person name="Kim D.S."/>
            <person name="De Juan-Pardo E."/>
            <person name="Demeyer K."/>
            <person name="Hole K."/>
            <person name="Larrea E."/>
            <person name="Timmerman E."/>
            <person name="Prieto J."/>
            <person name="Arnesen T."/>
            <person name="Sherman F."/>
            <person name="Gevaert K."/>
            <person name="Aldabe R."/>
        </authorList>
    </citation>
    <scope>ACETYLATION [LARGE SCALE ANALYSIS] AT MET-1</scope>
    <scope>IDENTIFICATION BY MASS SPECTROMETRY [LARGE SCALE ANALYSIS]</scope>
</reference>
<comment type="function">
    <text>Binds specifically to cytosolic chaperonin (c-CPN) and transfers target proteins to it. Binds to nascent polypeptide chain and promotes folding in an environment in which there are many competing pathways for nonnative proteins.</text>
</comment>
<comment type="subunit">
    <text evidence="2">Heterohexamer of two PFD-alpha type and four PFD-beta type subunits.</text>
</comment>
<comment type="interaction">
    <interactant intactId="EBI-13246">
        <id>P53900</id>
    </interactant>
    <interactant intactId="EBI-13239">
        <id>P48363</id>
        <label>PAC10</label>
    </interactant>
    <organismsDiffer>false</organismsDiffer>
    <experiments>4</experiments>
</comment>
<comment type="interaction">
    <interactant intactId="EBI-13246">
        <id>P53900</id>
    </interactant>
    <interactant intactId="EBI-13260">
        <id>P52553</id>
        <label>YKE2</label>
    </interactant>
    <organismsDiffer>false</organismsDiffer>
    <experiments>3</experiments>
</comment>
<comment type="miscellaneous">
    <text evidence="1">Present with 7470 molecules/cell in log phase SD medium.</text>
</comment>
<comment type="similarity">
    <text evidence="3">Belongs to the prefoldin subunit beta family.</text>
</comment>
<organism>
    <name type="scientific">Saccharomyces cerevisiae (strain ATCC 204508 / S288c)</name>
    <name type="common">Baker's yeast</name>
    <dbReference type="NCBI Taxonomy" id="559292"/>
    <lineage>
        <taxon>Eukaryota</taxon>
        <taxon>Fungi</taxon>
        <taxon>Dikarya</taxon>
        <taxon>Ascomycota</taxon>
        <taxon>Saccharomycotina</taxon>
        <taxon>Saccharomycetes</taxon>
        <taxon>Saccharomycetales</taxon>
        <taxon>Saccharomycetaceae</taxon>
        <taxon>Saccharomyces</taxon>
    </lineage>
</organism>
<feature type="chain" id="PRO_0000124848" description="Prefoldin subunit 4">
    <location>
        <begin position="1"/>
        <end position="129"/>
    </location>
</feature>
<feature type="modified residue" description="N-acetylmethionine" evidence="4">
    <location>
        <position position="1"/>
    </location>
</feature>
<name>PFD4_YEAST</name>
<dbReference type="EMBL" id="X92517">
    <property type="protein sequence ID" value="CAA63286.1"/>
    <property type="molecule type" value="Genomic_DNA"/>
</dbReference>
<dbReference type="EMBL" id="Z71429">
    <property type="protein sequence ID" value="CAA96040.1"/>
    <property type="molecule type" value="Genomic_DNA"/>
</dbReference>
<dbReference type="EMBL" id="AY692812">
    <property type="protein sequence ID" value="AAT92831.1"/>
    <property type="molecule type" value="Genomic_DNA"/>
</dbReference>
<dbReference type="EMBL" id="BK006947">
    <property type="protein sequence ID" value="DAA10396.1"/>
    <property type="molecule type" value="Genomic_DNA"/>
</dbReference>
<dbReference type="PIR" id="S60974">
    <property type="entry name" value="S60974"/>
</dbReference>
<dbReference type="RefSeq" id="NP_014246.1">
    <property type="nucleotide sequence ID" value="NM_001182991.1"/>
</dbReference>
<dbReference type="SMR" id="P53900"/>
<dbReference type="BioGRID" id="35676">
    <property type="interactions" value="840"/>
</dbReference>
<dbReference type="ComplexPortal" id="CPX-1671">
    <property type="entry name" value="Prefoldin co-chaperone complex"/>
</dbReference>
<dbReference type="DIP" id="DIP-3000N"/>
<dbReference type="FunCoup" id="P53900">
    <property type="interactions" value="853"/>
</dbReference>
<dbReference type="IntAct" id="P53900">
    <property type="interactions" value="13"/>
</dbReference>
<dbReference type="MINT" id="P53900"/>
<dbReference type="STRING" id="4932.YNL153C"/>
<dbReference type="iPTMnet" id="P53900"/>
<dbReference type="PaxDb" id="4932-YNL153C"/>
<dbReference type="PeptideAtlas" id="P53900"/>
<dbReference type="EnsemblFungi" id="YNL153C_mRNA">
    <property type="protein sequence ID" value="YNL153C"/>
    <property type="gene ID" value="YNL153C"/>
</dbReference>
<dbReference type="GeneID" id="855569"/>
<dbReference type="KEGG" id="sce:YNL153C"/>
<dbReference type="AGR" id="SGD:S000005097"/>
<dbReference type="SGD" id="S000005097">
    <property type="gene designation" value="GIM3"/>
</dbReference>
<dbReference type="VEuPathDB" id="FungiDB:YNL153C"/>
<dbReference type="eggNOG" id="KOG1760">
    <property type="taxonomic scope" value="Eukaryota"/>
</dbReference>
<dbReference type="GeneTree" id="ENSGT00390000006696"/>
<dbReference type="HOGENOM" id="CLU_130032_0_0_1"/>
<dbReference type="InParanoid" id="P53900"/>
<dbReference type="OMA" id="KFGRAIN"/>
<dbReference type="OrthoDB" id="10250441at2759"/>
<dbReference type="BioCyc" id="YEAST:G3O-33170-MONOMER"/>
<dbReference type="BioGRID-ORCS" id="855569">
    <property type="hits" value="7 hits in 10 CRISPR screens"/>
</dbReference>
<dbReference type="PRO" id="PR:P53900"/>
<dbReference type="Proteomes" id="UP000002311">
    <property type="component" value="Chromosome XIV"/>
</dbReference>
<dbReference type="RNAct" id="P53900">
    <property type="molecule type" value="protein"/>
</dbReference>
<dbReference type="GO" id="GO:0005737">
    <property type="term" value="C:cytoplasm"/>
    <property type="evidence" value="ECO:0000314"/>
    <property type="project" value="SGD"/>
</dbReference>
<dbReference type="GO" id="GO:0016272">
    <property type="term" value="C:prefoldin complex"/>
    <property type="evidence" value="ECO:0000353"/>
    <property type="project" value="ComplexPortal"/>
</dbReference>
<dbReference type="GO" id="GO:0015631">
    <property type="term" value="F:tubulin binding"/>
    <property type="evidence" value="ECO:0000314"/>
    <property type="project" value="SGD"/>
</dbReference>
<dbReference type="GO" id="GO:0051082">
    <property type="term" value="F:unfolded protein binding"/>
    <property type="evidence" value="ECO:0000318"/>
    <property type="project" value="GO_Central"/>
</dbReference>
<dbReference type="GO" id="GO:0071629">
    <property type="term" value="P:cytoplasm protein quality control by the ubiquitin-proteasome system"/>
    <property type="evidence" value="ECO:0000315"/>
    <property type="project" value="SGD"/>
</dbReference>
<dbReference type="GO" id="GO:0032968">
    <property type="term" value="P:positive regulation of transcription elongation by RNA polymerase II"/>
    <property type="evidence" value="ECO:0000315"/>
    <property type="project" value="SGD"/>
</dbReference>
<dbReference type="GO" id="GO:0006457">
    <property type="term" value="P:protein folding"/>
    <property type="evidence" value="ECO:0000318"/>
    <property type="project" value="GO_Central"/>
</dbReference>
<dbReference type="GO" id="GO:0007021">
    <property type="term" value="P:tubulin complex assembly"/>
    <property type="evidence" value="ECO:0000315"/>
    <property type="project" value="SGD"/>
</dbReference>
<dbReference type="CDD" id="cd23165">
    <property type="entry name" value="Prefoldin_4"/>
    <property type="match status" value="1"/>
</dbReference>
<dbReference type="FunFam" id="1.10.287.370:FF:000005">
    <property type="entry name" value="Prefoldin subunit 4"/>
    <property type="match status" value="1"/>
</dbReference>
<dbReference type="Gene3D" id="1.10.287.370">
    <property type="match status" value="1"/>
</dbReference>
<dbReference type="InterPro" id="IPR002777">
    <property type="entry name" value="PFD_beta-like"/>
</dbReference>
<dbReference type="InterPro" id="IPR016661">
    <property type="entry name" value="PFDN4"/>
</dbReference>
<dbReference type="InterPro" id="IPR009053">
    <property type="entry name" value="Prefoldin"/>
</dbReference>
<dbReference type="PANTHER" id="PTHR21100">
    <property type="entry name" value="PREFOLDIN SUBUNIT 4"/>
    <property type="match status" value="1"/>
</dbReference>
<dbReference type="PANTHER" id="PTHR21100:SF9">
    <property type="entry name" value="PREFOLDIN SUBUNIT 4"/>
    <property type="match status" value="1"/>
</dbReference>
<dbReference type="Pfam" id="PF01920">
    <property type="entry name" value="Prefoldin_2"/>
    <property type="match status" value="1"/>
</dbReference>
<dbReference type="PIRSF" id="PIRSF016477">
    <property type="entry name" value="Prefoldin_subunit_4"/>
    <property type="match status" value="1"/>
</dbReference>
<dbReference type="SUPFAM" id="SSF46579">
    <property type="entry name" value="Prefoldin"/>
    <property type="match status" value="1"/>
</dbReference>
<sequence>MELLPQGQRNNTQVTFEDQQKINEFSKLIMRKDAIAQELSLQREEKEYLDDVSLEIELIDEDEPVQYKVGDLFIFMKQSKVTAQLEKDAERLDNKIETLEDKQRDIDSRLDALKAILYAKFGDNINLER</sequence>
<accession>P53900</accession>
<accession>D6W130</accession>
<proteinExistence type="evidence at protein level"/>
<evidence type="ECO:0000269" key="1">
    <source>
    </source>
</evidence>
<evidence type="ECO:0000269" key="2">
    <source>
    </source>
</evidence>
<evidence type="ECO:0000305" key="3"/>
<evidence type="ECO:0007744" key="4">
    <source>
    </source>
</evidence>
<keyword id="KW-0007">Acetylation</keyword>
<keyword id="KW-0143">Chaperone</keyword>
<keyword id="KW-1185">Reference proteome</keyword>